<dbReference type="EC" id="4.2.1.-" evidence="1"/>
<dbReference type="EMBL" id="CP000943">
    <property type="protein sequence ID" value="ACA16587.1"/>
    <property type="molecule type" value="Genomic_DNA"/>
</dbReference>
<dbReference type="RefSeq" id="WP_012331996.1">
    <property type="nucleotide sequence ID" value="NC_010511.1"/>
</dbReference>
<dbReference type="SMR" id="B0UBJ1"/>
<dbReference type="STRING" id="426117.M446_2125"/>
<dbReference type="KEGG" id="met:M446_2125"/>
<dbReference type="eggNOG" id="COG4336">
    <property type="taxonomic scope" value="Bacteria"/>
</dbReference>
<dbReference type="HOGENOM" id="CLU_059759_0_0_5"/>
<dbReference type="GO" id="GO:0016829">
    <property type="term" value="F:lyase activity"/>
    <property type="evidence" value="ECO:0007669"/>
    <property type="project" value="UniProtKB-KW"/>
</dbReference>
<dbReference type="FunFam" id="3.30.2040.10:FF:000001">
    <property type="entry name" value="D-glutamate cyclase, mitochondrial"/>
    <property type="match status" value="1"/>
</dbReference>
<dbReference type="Gene3D" id="3.40.1640.10">
    <property type="entry name" value="PSTPO5379-like"/>
    <property type="match status" value="1"/>
</dbReference>
<dbReference type="Gene3D" id="3.30.2040.10">
    <property type="entry name" value="PSTPO5379-like domain"/>
    <property type="match status" value="1"/>
</dbReference>
<dbReference type="HAMAP" id="MF_01830">
    <property type="entry name" value="Hydro_lyase"/>
    <property type="match status" value="1"/>
</dbReference>
<dbReference type="InterPro" id="IPR009906">
    <property type="entry name" value="D-Glu_cyclase"/>
</dbReference>
<dbReference type="InterPro" id="IPR038021">
    <property type="entry name" value="Putative_hydro-lyase"/>
</dbReference>
<dbReference type="InterPro" id="IPR016938">
    <property type="entry name" value="UPF0317"/>
</dbReference>
<dbReference type="NCBIfam" id="NF003969">
    <property type="entry name" value="PRK05463.1"/>
    <property type="match status" value="1"/>
</dbReference>
<dbReference type="PANTHER" id="PTHR32022">
    <property type="entry name" value="D-GLUTAMATE CYCLASE, MITOCHONDRIAL"/>
    <property type="match status" value="1"/>
</dbReference>
<dbReference type="PANTHER" id="PTHR32022:SF10">
    <property type="entry name" value="D-GLUTAMATE CYCLASE, MITOCHONDRIAL"/>
    <property type="match status" value="1"/>
</dbReference>
<dbReference type="Pfam" id="PF07286">
    <property type="entry name" value="D-Glu_cyclase"/>
    <property type="match status" value="1"/>
</dbReference>
<dbReference type="PIRSF" id="PIRSF029755">
    <property type="entry name" value="UCP029755"/>
    <property type="match status" value="1"/>
</dbReference>
<dbReference type="SUPFAM" id="SSF160920">
    <property type="entry name" value="PSTPO5379-like"/>
    <property type="match status" value="1"/>
</dbReference>
<organism>
    <name type="scientific">Methylobacterium sp. (strain 4-46)</name>
    <dbReference type="NCBI Taxonomy" id="426117"/>
    <lineage>
        <taxon>Bacteria</taxon>
        <taxon>Pseudomonadati</taxon>
        <taxon>Pseudomonadota</taxon>
        <taxon>Alphaproteobacteria</taxon>
        <taxon>Hyphomicrobiales</taxon>
        <taxon>Methylobacteriaceae</taxon>
        <taxon>Methylobacterium</taxon>
    </lineage>
</organism>
<gene>
    <name type="ordered locus">M446_2125</name>
</gene>
<accession>B0UBJ1</accession>
<evidence type="ECO:0000255" key="1">
    <source>
        <dbReference type="HAMAP-Rule" id="MF_01830"/>
    </source>
</evidence>
<protein>
    <recommendedName>
        <fullName evidence="1">Putative hydro-lyase M446_2125</fullName>
        <ecNumber evidence="1">4.2.1.-</ecNumber>
    </recommendedName>
</protein>
<sequence length="269" mass="29133">MTFLRNPADRARLTGHEARLACRRGEIVGSTAGLAHGYVQANLAVLPKDLATDFLLFAQRNPKPCPIIGVSAPGDRRIPELGEDLDIATDVSGYRVWRHGEMVEERLDVADLWRDDLVAFAIGCSFSFEAAMVEDGLPLRHVEMGVRVPMYRTTVPCRPAGPFAGPMVVSMRPLTPAQAIRAVQITSRFPAVHGAPVHLGLPEAIGIRDLGRPDYGDPVRVAPDEIPVFWACGVTPQSVIAASKPSFAITHAPGAMLVTDRRNSEFAVL</sequence>
<proteinExistence type="inferred from homology"/>
<feature type="chain" id="PRO_0000379845" description="Putative hydro-lyase M446_2125">
    <location>
        <begin position="1"/>
        <end position="269"/>
    </location>
</feature>
<name>Y2125_METS4</name>
<keyword id="KW-0456">Lyase</keyword>
<reference key="1">
    <citation type="submission" date="2008-02" db="EMBL/GenBank/DDBJ databases">
        <title>Complete sequence of chromosome of Methylobacterium sp. 4-46.</title>
        <authorList>
            <consortium name="US DOE Joint Genome Institute"/>
            <person name="Copeland A."/>
            <person name="Lucas S."/>
            <person name="Lapidus A."/>
            <person name="Glavina del Rio T."/>
            <person name="Dalin E."/>
            <person name="Tice H."/>
            <person name="Bruce D."/>
            <person name="Goodwin L."/>
            <person name="Pitluck S."/>
            <person name="Chertkov O."/>
            <person name="Brettin T."/>
            <person name="Detter J.C."/>
            <person name="Han C."/>
            <person name="Kuske C.R."/>
            <person name="Schmutz J."/>
            <person name="Larimer F."/>
            <person name="Land M."/>
            <person name="Hauser L."/>
            <person name="Kyrpides N."/>
            <person name="Ivanova N."/>
            <person name="Marx C.J."/>
            <person name="Richardson P."/>
        </authorList>
    </citation>
    <scope>NUCLEOTIDE SEQUENCE [LARGE SCALE GENOMIC DNA]</scope>
    <source>
        <strain>4-46</strain>
    </source>
</reference>
<comment type="similarity">
    <text evidence="1">Belongs to the D-glutamate cyclase family.</text>
</comment>